<gene>
    <name type="primary">P33</name>
    <name type="ORF">ORF92</name>
</gene>
<comment type="function">
    <text evidence="1">Functional FAD-linked sulfhydryl oxidase that is required for infectious budded virion (BV) production and for the formation of enveloped occluded virion (ODV).</text>
</comment>
<comment type="catalytic activity">
    <reaction>
        <text>2 R'C(R)SH + O2 = R'C(R)S-S(R)CR' + H2O2</text>
        <dbReference type="Rhea" id="RHEA:17357"/>
        <dbReference type="ChEBI" id="CHEBI:15379"/>
        <dbReference type="ChEBI" id="CHEBI:16240"/>
        <dbReference type="ChEBI" id="CHEBI:16520"/>
        <dbReference type="ChEBI" id="CHEBI:17412"/>
        <dbReference type="EC" id="1.8.3.2"/>
    </reaction>
</comment>
<comment type="subunit">
    <text evidence="2">Homodimer.</text>
</comment>
<comment type="subcellular location">
    <subcellularLocation>
        <location evidence="3">Host cytoplasm</location>
    </subcellularLocation>
    <subcellularLocation>
        <location evidence="3">Host nucleus</location>
    </subcellularLocation>
    <text evidence="3">Shows a diffuse pattern of localization in the host cytoplasm and punctate localization in host nucleus.</text>
</comment>
<comment type="similarity">
    <text evidence="4">Belongs to the baculoviridae p33 family.</text>
</comment>
<feature type="chain" id="PRO_0000132896" description="FAD-linked sulfhydryl oxidase">
    <location>
        <begin position="1"/>
        <end position="259"/>
    </location>
</feature>
<feature type="helix" evidence="5">
    <location>
        <begin position="6"/>
        <end position="24"/>
    </location>
</feature>
<feature type="helix" evidence="5">
    <location>
        <begin position="25"/>
        <end position="28"/>
    </location>
</feature>
<feature type="helix" evidence="5">
    <location>
        <begin position="32"/>
        <end position="54"/>
    </location>
</feature>
<feature type="helix" evidence="5">
    <location>
        <begin position="59"/>
        <end position="71"/>
    </location>
</feature>
<feature type="helix" evidence="5">
    <location>
        <begin position="78"/>
        <end position="91"/>
    </location>
</feature>
<feature type="helix" evidence="5">
    <location>
        <begin position="95"/>
        <end position="97"/>
    </location>
</feature>
<feature type="helix" evidence="5">
    <location>
        <begin position="106"/>
        <end position="125"/>
    </location>
</feature>
<feature type="turn" evidence="5">
    <location>
        <begin position="126"/>
        <end position="128"/>
    </location>
</feature>
<feature type="helix" evidence="6">
    <location>
        <begin position="129"/>
        <end position="131"/>
    </location>
</feature>
<feature type="helix" evidence="5">
    <location>
        <begin position="132"/>
        <end position="147"/>
    </location>
</feature>
<feature type="helix" evidence="5">
    <location>
        <begin position="156"/>
        <end position="165"/>
    </location>
</feature>
<feature type="helix" evidence="5">
    <location>
        <begin position="167"/>
        <end position="184"/>
    </location>
</feature>
<feature type="strand" evidence="5">
    <location>
        <begin position="190"/>
        <end position="193"/>
    </location>
</feature>
<feature type="helix" evidence="5">
    <location>
        <begin position="195"/>
        <end position="202"/>
    </location>
</feature>
<feature type="strand" evidence="5">
    <location>
        <begin position="204"/>
        <end position="207"/>
    </location>
</feature>
<feature type="strand" evidence="5">
    <location>
        <begin position="211"/>
        <end position="213"/>
    </location>
</feature>
<feature type="helix" evidence="5">
    <location>
        <begin position="216"/>
        <end position="235"/>
    </location>
</feature>
<feature type="helix" evidence="5">
    <location>
        <begin position="249"/>
        <end position="256"/>
    </location>
</feature>
<proteinExistence type="evidence at protein level"/>
<organismHost>
    <name type="scientific">Lepidoptera</name>
    <name type="common">butterflies and moths</name>
    <dbReference type="NCBI Taxonomy" id="7088"/>
</organismHost>
<organism>
    <name type="scientific">Autographa californica nuclear polyhedrosis virus</name>
    <name type="common">AcMNPV</name>
    <dbReference type="NCBI Taxonomy" id="46015"/>
    <lineage>
        <taxon>Viruses</taxon>
        <taxon>Viruses incertae sedis</taxon>
        <taxon>Naldaviricetes</taxon>
        <taxon>Lefavirales</taxon>
        <taxon>Baculoviridae</taxon>
        <taxon>Alphabaculovirus</taxon>
        <taxon>Alphabaculovirus aucalifornicae</taxon>
    </lineage>
</organism>
<accession>P41480</accession>
<dbReference type="EC" id="1.8.3.2"/>
<dbReference type="EMBL" id="L22858">
    <property type="protein sequence ID" value="AAA66722.1"/>
    <property type="molecule type" value="Genomic_DNA"/>
</dbReference>
<dbReference type="PIR" id="E72861">
    <property type="entry name" value="E72861"/>
</dbReference>
<dbReference type="PDB" id="3P0K">
    <property type="method" value="X-ray"/>
    <property type="resolution" value="1.47 A"/>
    <property type="chains" value="A=2-259"/>
</dbReference>
<dbReference type="PDB" id="3QZY">
    <property type="method" value="X-ray"/>
    <property type="resolution" value="2.14 A"/>
    <property type="chains" value="A/B=2-259"/>
</dbReference>
<dbReference type="PDB" id="5XKI">
    <property type="method" value="X-ray"/>
    <property type="resolution" value="2.46 A"/>
    <property type="chains" value="A/B=1-259"/>
</dbReference>
<dbReference type="PDB" id="5XTN">
    <property type="method" value="X-ray"/>
    <property type="resolution" value="2.54 A"/>
    <property type="chains" value="A/B/C/D=1-259"/>
</dbReference>
<dbReference type="PDB" id="5XTO">
    <property type="method" value="X-ray"/>
    <property type="resolution" value="2.56 A"/>
    <property type="chains" value="A/B/C/D=1-259"/>
</dbReference>
<dbReference type="PDB" id="5XTP">
    <property type="method" value="X-ray"/>
    <property type="resolution" value="2.40 A"/>
    <property type="chains" value="A/B/C/D=1-259"/>
</dbReference>
<dbReference type="PDB" id="5XTQ">
    <property type="method" value="X-ray"/>
    <property type="resolution" value="2.04 A"/>
    <property type="chains" value="A/B/C/D=1-259"/>
</dbReference>
<dbReference type="PDB" id="5XTR">
    <property type="method" value="X-ray"/>
    <property type="resolution" value="2.25 A"/>
    <property type="chains" value="A/B/C/D=1-259"/>
</dbReference>
<dbReference type="PDBsum" id="3P0K"/>
<dbReference type="PDBsum" id="3QZY"/>
<dbReference type="PDBsum" id="5XKI"/>
<dbReference type="PDBsum" id="5XTN"/>
<dbReference type="PDBsum" id="5XTO"/>
<dbReference type="PDBsum" id="5XTP"/>
<dbReference type="PDBsum" id="5XTQ"/>
<dbReference type="PDBsum" id="5XTR"/>
<dbReference type="SMR" id="P41480"/>
<dbReference type="KEGG" id="vg:1403925"/>
<dbReference type="OrthoDB" id="8905at10239"/>
<dbReference type="BRENDA" id="1.8.3.2">
    <property type="organism ID" value="583"/>
</dbReference>
<dbReference type="EvolutionaryTrace" id="P41480"/>
<dbReference type="Proteomes" id="UP000008292">
    <property type="component" value="Segment"/>
</dbReference>
<dbReference type="GO" id="GO:0030430">
    <property type="term" value="C:host cell cytoplasm"/>
    <property type="evidence" value="ECO:0007669"/>
    <property type="project" value="UniProtKB-SubCell"/>
</dbReference>
<dbReference type="GO" id="GO:0042025">
    <property type="term" value="C:host cell nucleus"/>
    <property type="evidence" value="ECO:0007669"/>
    <property type="project" value="UniProtKB-SubCell"/>
</dbReference>
<dbReference type="GO" id="GO:0016972">
    <property type="term" value="F:thiol oxidase activity"/>
    <property type="evidence" value="ECO:0007669"/>
    <property type="project" value="UniProtKB-EC"/>
</dbReference>
<dbReference type="InterPro" id="IPR007879">
    <property type="entry name" value="Baculo_p33"/>
</dbReference>
<dbReference type="Pfam" id="PF05214">
    <property type="entry name" value="Baculo_p33"/>
    <property type="match status" value="1"/>
</dbReference>
<evidence type="ECO:0000269" key="1">
    <source>
    </source>
</evidence>
<evidence type="ECO:0000269" key="2">
    <source>
    </source>
</evidence>
<evidence type="ECO:0000269" key="3">
    <source>
    </source>
</evidence>
<evidence type="ECO:0000305" key="4"/>
<evidence type="ECO:0007829" key="5">
    <source>
        <dbReference type="PDB" id="3P0K"/>
    </source>
</evidence>
<evidence type="ECO:0007829" key="6">
    <source>
        <dbReference type="PDB" id="3QZY"/>
    </source>
</evidence>
<protein>
    <recommendedName>
        <fullName>FAD-linked sulfhydryl oxidase</fullName>
    </recommendedName>
    <alternativeName>
        <fullName>p33</fullName>
        <ecNumber>1.8.3.2</ecNumber>
    </alternativeName>
</protein>
<keyword id="KW-0002">3D-structure</keyword>
<keyword id="KW-0244">Early protein</keyword>
<keyword id="KW-1035">Host cytoplasm</keyword>
<keyword id="KW-1048">Host nucleus</keyword>
<keyword id="KW-0560">Oxidoreductase</keyword>
<keyword id="KW-1185">Reference proteome</keyword>
<reference key="1">
    <citation type="journal article" date="1994" name="Virology">
        <title>The complete DNA sequence of Autographa californica nuclear polyhedrosis virus.</title>
        <authorList>
            <person name="Ayres M.D."/>
            <person name="Howard S.C."/>
            <person name="Kuzio J."/>
            <person name="Lopez-Ferber M."/>
            <person name="Possee R.D."/>
        </authorList>
    </citation>
    <scope>NUCLEOTIDE SEQUENCE [LARGE SCALE GENOMIC DNA]</scope>
    <source>
        <strain>C6</strain>
    </source>
</reference>
<reference key="2">
    <citation type="journal article" date="1999" name="J. Virol.">
        <title>Baculovirus p33 binds human p53 and enhances p53-mediated apoptosis.</title>
        <authorList>
            <person name="Prikhod'ko G.G."/>
            <person name="Wang Y."/>
            <person name="Freulich E."/>
            <person name="Prives C."/>
            <person name="Miller L.K."/>
        </authorList>
    </citation>
    <scope>SUBCELLULAR LOCATION</scope>
</reference>
<reference key="3">
    <citation type="journal article" date="2009" name="Virology">
        <title>The conserved baculovirus protein p33 (Ac92) is a flavin adenine dinucleotide-linked sulfhydryl oxidase.</title>
        <authorList>
            <person name="Long C.M."/>
            <person name="Rohrmann G.F."/>
            <person name="Merrill G.F."/>
        </authorList>
    </citation>
    <scope>FUNCTION</scope>
</reference>
<reference key="4">
    <citation type="journal article" date="2011" name="J. Virol.">
        <title>Structure of a baculovirus sulfhydryl oxidase, a highly divergent member of the erv flavoenzyme family.</title>
        <authorList>
            <person name="Hakim M."/>
            <person name="Mandelbaum A."/>
            <person name="Fass D."/>
        </authorList>
    </citation>
    <scope>X-RAY CRYSTALLOGRAPHY (1.47 ANGSTROMS) OF 2-259</scope>
    <scope>SUBUNIT</scope>
</reference>
<name>FLSO_NPVAC</name>
<sequence length="259" mass="30937">MIPLTPLFSRYKDSYLLYSFRLIDLLRASKSTHLTKLLSSQATYLYHFACLMKYKDIQKYEVQQLIEWAINASPDMDLQQFRIEFMDKTTELNLRSCQPKSFTYTFTTIWDTMHFLSLIIDDMVYTRDKSSLDFVMQQLKTMKVLFYNVFFILQCAMCRDHYMNVKGFIIYHIELIEIALDKEKYGTDITFVDSYQQETAGADVAVVSNNMLMKNLMAYVSMTFHNHINDYKWIQRNKKPPAHYERMTWGEYKKLLNLQ</sequence>